<protein>
    <recommendedName>
        <fullName evidence="1">Small ribosomal subunit protein uS3</fullName>
    </recommendedName>
    <alternativeName>
        <fullName evidence="2">30S ribosomal protein S3</fullName>
    </alternativeName>
</protein>
<name>RS3_CLONN</name>
<comment type="function">
    <text evidence="1">Binds the lower part of the 30S subunit head. Binds mRNA in the 70S ribosome, positioning it for translation.</text>
</comment>
<comment type="subunit">
    <text evidence="1">Part of the 30S ribosomal subunit. Forms a tight complex with proteins S10 and S14.</text>
</comment>
<comment type="similarity">
    <text evidence="1">Belongs to the universal ribosomal protein uS3 family.</text>
</comment>
<evidence type="ECO:0000255" key="1">
    <source>
        <dbReference type="HAMAP-Rule" id="MF_01309"/>
    </source>
</evidence>
<evidence type="ECO:0000305" key="2"/>
<feature type="chain" id="PRO_0000293775" description="Small ribosomal subunit protein uS3">
    <location>
        <begin position="1"/>
        <end position="221"/>
    </location>
</feature>
<feature type="domain" description="KH type-2" evidence="1">
    <location>
        <begin position="39"/>
        <end position="108"/>
    </location>
</feature>
<sequence length="221" mass="24878">MGQKVHPHGLRVGVIKDWDAKWYANSQNFADNLIEDDKIRKFVKKRSYSAGIAKIEIERTAKRVKINIHTGKPGMIIGKGGKGIEELKSEILKMIKEKNVIINIVEVKRPETDAQLMAENVAQQLEKRISFRRAMKQTIQRAMRSGAKGVKTACSGRLGGAEIARTEQYHEGTIPLQTLRADIDYGFAEADTTYGKIGVKVWLYKGEVLPTKKVRTEEISQ</sequence>
<organism>
    <name type="scientific">Clostridium novyi (strain NT)</name>
    <dbReference type="NCBI Taxonomy" id="386415"/>
    <lineage>
        <taxon>Bacteria</taxon>
        <taxon>Bacillati</taxon>
        <taxon>Bacillota</taxon>
        <taxon>Clostridia</taxon>
        <taxon>Eubacteriales</taxon>
        <taxon>Clostridiaceae</taxon>
        <taxon>Clostridium</taxon>
    </lineage>
</organism>
<proteinExistence type="inferred from homology"/>
<reference key="1">
    <citation type="journal article" date="2006" name="Nat. Biotechnol.">
        <title>The genome and transcriptomes of the anti-tumor agent Clostridium novyi-NT.</title>
        <authorList>
            <person name="Bettegowda C."/>
            <person name="Huang X."/>
            <person name="Lin J."/>
            <person name="Cheong I."/>
            <person name="Kohli M."/>
            <person name="Szabo S.A."/>
            <person name="Zhang X."/>
            <person name="Diaz L.A. Jr."/>
            <person name="Velculescu V.E."/>
            <person name="Parmigiani G."/>
            <person name="Kinzler K.W."/>
            <person name="Vogelstein B."/>
            <person name="Zhou S."/>
        </authorList>
    </citation>
    <scope>NUCLEOTIDE SEQUENCE [LARGE SCALE GENOMIC DNA]</scope>
    <source>
        <strain>NT</strain>
    </source>
</reference>
<dbReference type="EMBL" id="CP000382">
    <property type="protein sequence ID" value="ABK61321.1"/>
    <property type="molecule type" value="Genomic_DNA"/>
</dbReference>
<dbReference type="RefSeq" id="WP_011721221.1">
    <property type="nucleotide sequence ID" value="NC_008593.1"/>
</dbReference>
<dbReference type="SMR" id="A0PXV2"/>
<dbReference type="STRING" id="386415.NT01CX_1121"/>
<dbReference type="KEGG" id="cno:NT01CX_1121"/>
<dbReference type="eggNOG" id="COG0092">
    <property type="taxonomic scope" value="Bacteria"/>
</dbReference>
<dbReference type="HOGENOM" id="CLU_058591_0_2_9"/>
<dbReference type="Proteomes" id="UP000008220">
    <property type="component" value="Chromosome"/>
</dbReference>
<dbReference type="GO" id="GO:0022627">
    <property type="term" value="C:cytosolic small ribosomal subunit"/>
    <property type="evidence" value="ECO:0007669"/>
    <property type="project" value="TreeGrafter"/>
</dbReference>
<dbReference type="GO" id="GO:0003729">
    <property type="term" value="F:mRNA binding"/>
    <property type="evidence" value="ECO:0007669"/>
    <property type="project" value="UniProtKB-UniRule"/>
</dbReference>
<dbReference type="GO" id="GO:0019843">
    <property type="term" value="F:rRNA binding"/>
    <property type="evidence" value="ECO:0007669"/>
    <property type="project" value="UniProtKB-UniRule"/>
</dbReference>
<dbReference type="GO" id="GO:0003735">
    <property type="term" value="F:structural constituent of ribosome"/>
    <property type="evidence" value="ECO:0007669"/>
    <property type="project" value="InterPro"/>
</dbReference>
<dbReference type="GO" id="GO:0006412">
    <property type="term" value="P:translation"/>
    <property type="evidence" value="ECO:0007669"/>
    <property type="project" value="UniProtKB-UniRule"/>
</dbReference>
<dbReference type="CDD" id="cd02412">
    <property type="entry name" value="KH-II_30S_S3"/>
    <property type="match status" value="1"/>
</dbReference>
<dbReference type="FunFam" id="3.30.1140.32:FF:000002">
    <property type="entry name" value="30S ribosomal protein S3"/>
    <property type="match status" value="1"/>
</dbReference>
<dbReference type="FunFam" id="3.30.300.20:FF:000001">
    <property type="entry name" value="30S ribosomal protein S3"/>
    <property type="match status" value="1"/>
</dbReference>
<dbReference type="Gene3D" id="3.30.300.20">
    <property type="match status" value="1"/>
</dbReference>
<dbReference type="Gene3D" id="3.30.1140.32">
    <property type="entry name" value="Ribosomal protein S3, C-terminal domain"/>
    <property type="match status" value="1"/>
</dbReference>
<dbReference type="HAMAP" id="MF_01309_B">
    <property type="entry name" value="Ribosomal_uS3_B"/>
    <property type="match status" value="1"/>
</dbReference>
<dbReference type="InterPro" id="IPR004087">
    <property type="entry name" value="KH_dom"/>
</dbReference>
<dbReference type="InterPro" id="IPR015946">
    <property type="entry name" value="KH_dom-like_a/b"/>
</dbReference>
<dbReference type="InterPro" id="IPR004044">
    <property type="entry name" value="KH_dom_type_2"/>
</dbReference>
<dbReference type="InterPro" id="IPR009019">
    <property type="entry name" value="KH_sf_prok-type"/>
</dbReference>
<dbReference type="InterPro" id="IPR036419">
    <property type="entry name" value="Ribosomal_S3_C_sf"/>
</dbReference>
<dbReference type="InterPro" id="IPR005704">
    <property type="entry name" value="Ribosomal_uS3_bac-typ"/>
</dbReference>
<dbReference type="InterPro" id="IPR001351">
    <property type="entry name" value="Ribosomal_uS3_C"/>
</dbReference>
<dbReference type="InterPro" id="IPR018280">
    <property type="entry name" value="Ribosomal_uS3_CS"/>
</dbReference>
<dbReference type="NCBIfam" id="TIGR01009">
    <property type="entry name" value="rpsC_bact"/>
    <property type="match status" value="1"/>
</dbReference>
<dbReference type="PANTHER" id="PTHR11760">
    <property type="entry name" value="30S/40S RIBOSOMAL PROTEIN S3"/>
    <property type="match status" value="1"/>
</dbReference>
<dbReference type="PANTHER" id="PTHR11760:SF19">
    <property type="entry name" value="SMALL RIBOSOMAL SUBUNIT PROTEIN US3C"/>
    <property type="match status" value="1"/>
</dbReference>
<dbReference type="Pfam" id="PF07650">
    <property type="entry name" value="KH_2"/>
    <property type="match status" value="1"/>
</dbReference>
<dbReference type="Pfam" id="PF00189">
    <property type="entry name" value="Ribosomal_S3_C"/>
    <property type="match status" value="1"/>
</dbReference>
<dbReference type="SMART" id="SM00322">
    <property type="entry name" value="KH"/>
    <property type="match status" value="1"/>
</dbReference>
<dbReference type="SUPFAM" id="SSF54814">
    <property type="entry name" value="Prokaryotic type KH domain (KH-domain type II)"/>
    <property type="match status" value="1"/>
</dbReference>
<dbReference type="SUPFAM" id="SSF54821">
    <property type="entry name" value="Ribosomal protein S3 C-terminal domain"/>
    <property type="match status" value="1"/>
</dbReference>
<dbReference type="PROSITE" id="PS50823">
    <property type="entry name" value="KH_TYPE_2"/>
    <property type="match status" value="1"/>
</dbReference>
<dbReference type="PROSITE" id="PS00548">
    <property type="entry name" value="RIBOSOMAL_S3"/>
    <property type="match status" value="1"/>
</dbReference>
<accession>A0PXV2</accession>
<keyword id="KW-1185">Reference proteome</keyword>
<keyword id="KW-0687">Ribonucleoprotein</keyword>
<keyword id="KW-0689">Ribosomal protein</keyword>
<keyword id="KW-0694">RNA-binding</keyword>
<keyword id="KW-0699">rRNA-binding</keyword>
<gene>
    <name evidence="1" type="primary">rpsC</name>
    <name type="ordered locus">NT01CX_1121</name>
</gene>